<name>SYFB_NOVAD</name>
<accession>Q2GAI7</accession>
<feature type="chain" id="PRO_0000232815" description="Phenylalanine--tRNA ligase beta subunit">
    <location>
        <begin position="1"/>
        <end position="796"/>
    </location>
</feature>
<feature type="domain" description="tRNA-binding" evidence="1">
    <location>
        <begin position="39"/>
        <end position="149"/>
    </location>
</feature>
<feature type="domain" description="B5" evidence="1">
    <location>
        <begin position="398"/>
        <end position="470"/>
    </location>
</feature>
<feature type="domain" description="FDX-ACB" evidence="1">
    <location>
        <begin position="703"/>
        <end position="795"/>
    </location>
</feature>
<feature type="binding site" evidence="1">
    <location>
        <position position="448"/>
    </location>
    <ligand>
        <name>Mg(2+)</name>
        <dbReference type="ChEBI" id="CHEBI:18420"/>
        <note>shared with alpha subunit</note>
    </ligand>
</feature>
<feature type="binding site" evidence="1">
    <location>
        <position position="454"/>
    </location>
    <ligand>
        <name>Mg(2+)</name>
        <dbReference type="ChEBI" id="CHEBI:18420"/>
        <note>shared with alpha subunit</note>
    </ligand>
</feature>
<feature type="binding site" evidence="1">
    <location>
        <position position="457"/>
    </location>
    <ligand>
        <name>Mg(2+)</name>
        <dbReference type="ChEBI" id="CHEBI:18420"/>
        <note>shared with alpha subunit</note>
    </ligand>
</feature>
<feature type="binding site" evidence="1">
    <location>
        <position position="458"/>
    </location>
    <ligand>
        <name>Mg(2+)</name>
        <dbReference type="ChEBI" id="CHEBI:18420"/>
        <note>shared with alpha subunit</note>
    </ligand>
</feature>
<dbReference type="EC" id="6.1.1.20" evidence="1"/>
<dbReference type="EMBL" id="CP000248">
    <property type="protein sequence ID" value="ABD25136.1"/>
    <property type="molecule type" value="Genomic_DNA"/>
</dbReference>
<dbReference type="RefSeq" id="WP_011444350.1">
    <property type="nucleotide sequence ID" value="NC_007794.1"/>
</dbReference>
<dbReference type="SMR" id="Q2GAI7"/>
<dbReference type="STRING" id="279238.Saro_0689"/>
<dbReference type="KEGG" id="nar:Saro_0689"/>
<dbReference type="eggNOG" id="COG0072">
    <property type="taxonomic scope" value="Bacteria"/>
</dbReference>
<dbReference type="HOGENOM" id="CLU_016891_0_0_5"/>
<dbReference type="Proteomes" id="UP000009134">
    <property type="component" value="Chromosome"/>
</dbReference>
<dbReference type="GO" id="GO:0009328">
    <property type="term" value="C:phenylalanine-tRNA ligase complex"/>
    <property type="evidence" value="ECO:0007669"/>
    <property type="project" value="TreeGrafter"/>
</dbReference>
<dbReference type="GO" id="GO:0005524">
    <property type="term" value="F:ATP binding"/>
    <property type="evidence" value="ECO:0007669"/>
    <property type="project" value="UniProtKB-UniRule"/>
</dbReference>
<dbReference type="GO" id="GO:0000287">
    <property type="term" value="F:magnesium ion binding"/>
    <property type="evidence" value="ECO:0007669"/>
    <property type="project" value="UniProtKB-UniRule"/>
</dbReference>
<dbReference type="GO" id="GO:0004826">
    <property type="term" value="F:phenylalanine-tRNA ligase activity"/>
    <property type="evidence" value="ECO:0007669"/>
    <property type="project" value="UniProtKB-UniRule"/>
</dbReference>
<dbReference type="GO" id="GO:0000049">
    <property type="term" value="F:tRNA binding"/>
    <property type="evidence" value="ECO:0007669"/>
    <property type="project" value="UniProtKB-KW"/>
</dbReference>
<dbReference type="GO" id="GO:0006432">
    <property type="term" value="P:phenylalanyl-tRNA aminoacylation"/>
    <property type="evidence" value="ECO:0007669"/>
    <property type="project" value="UniProtKB-UniRule"/>
</dbReference>
<dbReference type="CDD" id="cd00769">
    <property type="entry name" value="PheRS_beta_core"/>
    <property type="match status" value="1"/>
</dbReference>
<dbReference type="CDD" id="cd02796">
    <property type="entry name" value="tRNA_bind_bactPheRS"/>
    <property type="match status" value="1"/>
</dbReference>
<dbReference type="FunFam" id="2.40.50.140:FF:000045">
    <property type="entry name" value="Phenylalanine--tRNA ligase beta subunit"/>
    <property type="match status" value="1"/>
</dbReference>
<dbReference type="Gene3D" id="3.30.56.10">
    <property type="match status" value="2"/>
</dbReference>
<dbReference type="Gene3D" id="3.30.930.10">
    <property type="entry name" value="Bira Bifunctional Protein, Domain 2"/>
    <property type="match status" value="1"/>
</dbReference>
<dbReference type="Gene3D" id="3.30.70.380">
    <property type="entry name" value="Ferrodoxin-fold anticodon-binding domain"/>
    <property type="match status" value="1"/>
</dbReference>
<dbReference type="Gene3D" id="2.40.50.140">
    <property type="entry name" value="Nucleic acid-binding proteins"/>
    <property type="match status" value="1"/>
</dbReference>
<dbReference type="Gene3D" id="3.50.40.10">
    <property type="entry name" value="Phenylalanyl-trna Synthetase, Chain B, domain 3"/>
    <property type="match status" value="1"/>
</dbReference>
<dbReference type="HAMAP" id="MF_00283">
    <property type="entry name" value="Phe_tRNA_synth_beta1"/>
    <property type="match status" value="1"/>
</dbReference>
<dbReference type="InterPro" id="IPR045864">
    <property type="entry name" value="aa-tRNA-synth_II/BPL/LPL"/>
</dbReference>
<dbReference type="InterPro" id="IPR005146">
    <property type="entry name" value="B3/B4_tRNA-bd"/>
</dbReference>
<dbReference type="InterPro" id="IPR009061">
    <property type="entry name" value="DNA-bd_dom_put_sf"/>
</dbReference>
<dbReference type="InterPro" id="IPR005121">
    <property type="entry name" value="Fdx_antiC-bd"/>
</dbReference>
<dbReference type="InterPro" id="IPR036690">
    <property type="entry name" value="Fdx_antiC-bd_sf"/>
</dbReference>
<dbReference type="InterPro" id="IPR012340">
    <property type="entry name" value="NA-bd_OB-fold"/>
</dbReference>
<dbReference type="InterPro" id="IPR045060">
    <property type="entry name" value="Phe-tRNA-ligase_IIc_bsu"/>
</dbReference>
<dbReference type="InterPro" id="IPR004532">
    <property type="entry name" value="Phe-tRNA-ligase_IIc_bsu_bact"/>
</dbReference>
<dbReference type="InterPro" id="IPR020825">
    <property type="entry name" value="Phe-tRNA_synthase-like_B3/B4"/>
</dbReference>
<dbReference type="InterPro" id="IPR041616">
    <property type="entry name" value="PheRS_beta_core"/>
</dbReference>
<dbReference type="InterPro" id="IPR002547">
    <property type="entry name" value="tRNA-bd_dom"/>
</dbReference>
<dbReference type="InterPro" id="IPR033714">
    <property type="entry name" value="tRNA_bind_bactPheRS"/>
</dbReference>
<dbReference type="InterPro" id="IPR005147">
    <property type="entry name" value="tRNA_synthase_B5-dom"/>
</dbReference>
<dbReference type="NCBIfam" id="TIGR00472">
    <property type="entry name" value="pheT_bact"/>
    <property type="match status" value="1"/>
</dbReference>
<dbReference type="NCBIfam" id="NF045760">
    <property type="entry name" value="YtpR"/>
    <property type="match status" value="1"/>
</dbReference>
<dbReference type="PANTHER" id="PTHR10947:SF0">
    <property type="entry name" value="PHENYLALANINE--TRNA LIGASE BETA SUBUNIT"/>
    <property type="match status" value="1"/>
</dbReference>
<dbReference type="PANTHER" id="PTHR10947">
    <property type="entry name" value="PHENYLALANYL-TRNA SYNTHETASE BETA CHAIN AND LEUCINE-RICH REPEAT-CONTAINING PROTEIN 47"/>
    <property type="match status" value="1"/>
</dbReference>
<dbReference type="Pfam" id="PF03483">
    <property type="entry name" value="B3_4"/>
    <property type="match status" value="1"/>
</dbReference>
<dbReference type="Pfam" id="PF03484">
    <property type="entry name" value="B5"/>
    <property type="match status" value="1"/>
</dbReference>
<dbReference type="Pfam" id="PF03147">
    <property type="entry name" value="FDX-ACB"/>
    <property type="match status" value="1"/>
</dbReference>
<dbReference type="Pfam" id="PF01588">
    <property type="entry name" value="tRNA_bind"/>
    <property type="match status" value="1"/>
</dbReference>
<dbReference type="Pfam" id="PF17759">
    <property type="entry name" value="tRNA_synthFbeta"/>
    <property type="match status" value="1"/>
</dbReference>
<dbReference type="SMART" id="SM00873">
    <property type="entry name" value="B3_4"/>
    <property type="match status" value="1"/>
</dbReference>
<dbReference type="SMART" id="SM00874">
    <property type="entry name" value="B5"/>
    <property type="match status" value="1"/>
</dbReference>
<dbReference type="SMART" id="SM00896">
    <property type="entry name" value="FDX-ACB"/>
    <property type="match status" value="1"/>
</dbReference>
<dbReference type="SUPFAM" id="SSF54991">
    <property type="entry name" value="Anticodon-binding domain of PheRS"/>
    <property type="match status" value="1"/>
</dbReference>
<dbReference type="SUPFAM" id="SSF55681">
    <property type="entry name" value="Class II aaRS and biotin synthetases"/>
    <property type="match status" value="1"/>
</dbReference>
<dbReference type="SUPFAM" id="SSF50249">
    <property type="entry name" value="Nucleic acid-binding proteins"/>
    <property type="match status" value="1"/>
</dbReference>
<dbReference type="SUPFAM" id="SSF56037">
    <property type="entry name" value="PheT/TilS domain"/>
    <property type="match status" value="1"/>
</dbReference>
<dbReference type="SUPFAM" id="SSF46955">
    <property type="entry name" value="Putative DNA-binding domain"/>
    <property type="match status" value="1"/>
</dbReference>
<dbReference type="PROSITE" id="PS51483">
    <property type="entry name" value="B5"/>
    <property type="match status" value="1"/>
</dbReference>
<dbReference type="PROSITE" id="PS51447">
    <property type="entry name" value="FDX_ACB"/>
    <property type="match status" value="1"/>
</dbReference>
<dbReference type="PROSITE" id="PS50886">
    <property type="entry name" value="TRBD"/>
    <property type="match status" value="1"/>
</dbReference>
<keyword id="KW-0030">Aminoacyl-tRNA synthetase</keyword>
<keyword id="KW-0067">ATP-binding</keyword>
<keyword id="KW-0963">Cytoplasm</keyword>
<keyword id="KW-0436">Ligase</keyword>
<keyword id="KW-0460">Magnesium</keyword>
<keyword id="KW-0479">Metal-binding</keyword>
<keyword id="KW-0547">Nucleotide-binding</keyword>
<keyword id="KW-0648">Protein biosynthesis</keyword>
<keyword id="KW-1185">Reference proteome</keyword>
<keyword id="KW-0694">RNA-binding</keyword>
<keyword id="KW-0820">tRNA-binding</keyword>
<evidence type="ECO:0000255" key="1">
    <source>
        <dbReference type="HAMAP-Rule" id="MF_00283"/>
    </source>
</evidence>
<reference key="1">
    <citation type="submission" date="2006-01" db="EMBL/GenBank/DDBJ databases">
        <title>Complete sequence of Novosphingobium aromaticivorans DSM 12444.</title>
        <authorList>
            <consortium name="US DOE Joint Genome Institute"/>
            <person name="Copeland A."/>
            <person name="Lucas S."/>
            <person name="Lapidus A."/>
            <person name="Barry K."/>
            <person name="Detter J.C."/>
            <person name="Glavina T."/>
            <person name="Hammon N."/>
            <person name="Israni S."/>
            <person name="Pitluck S."/>
            <person name="Chain P."/>
            <person name="Malfatti S."/>
            <person name="Shin M."/>
            <person name="Vergez L."/>
            <person name="Schmutz J."/>
            <person name="Larimer F."/>
            <person name="Land M."/>
            <person name="Kyrpides N."/>
            <person name="Ivanova N."/>
            <person name="Fredrickson J."/>
            <person name="Balkwill D."/>
            <person name="Romine M.F."/>
            <person name="Richardson P."/>
        </authorList>
    </citation>
    <scope>NUCLEOTIDE SEQUENCE [LARGE SCALE GENOMIC DNA]</scope>
    <source>
        <strain>ATCC 700278 / DSM 12444 / CCUG 56034 / CIP 105152 / NBRC 16084 / F199</strain>
    </source>
</reference>
<proteinExistence type="inferred from homology"/>
<gene>
    <name evidence="1" type="primary">pheT</name>
    <name type="ordered locus">Saro_0689</name>
</gene>
<sequence>MKFSFSWLKSVLDTKADAKLIAEKLTSLGLEIESVEDASAALKSFRVARVLTAEKHPQADKLQVLSVDLGDGNPLQVVCGAPNARAGLVGVLGLPGAVVPANGMELRKSAIRGVESNGMMCSTRELGLGEEHDGIIELPGDAPLGTTFADYLGSDPVFDVAITPNRPDCMGVYGIARDLAAAGLGVLKPIAAQSVAGSFPCPVEVRTDDPEGCPAFYGRVIRGVRNGPSPKWLQDYLKSAGQRPISALVDITNYVMLGYGRPAHAYDVAKLSGAVVARKAREGETCLALNGKEYGLQPWMTVIADDAGVHDIAGIMGGEHSGCSDETTDVLLEVAYFTPANIARTGQALALTSDARGRFERGVDPAFLDTGLDLLTSLILEICGGEASEVVRAGEPPLARKALAYDPDLAGNLGGIDVAAAEQKRILGALGFDVADDWTVAVPTWRPDVAGPPDIVEEVIRVHGLDAVPSTPLPRADGVAKPTATPAQMLERRVRRAAASRGLHEAVTWSFLPEAEAARFADGEALWSLANPISEDLKVMRPSLLPGLLSAAQRNLHRGATSIRLFEIGRRYLRGAGGASDEKLSLAVVLAGDRIARGWASGKAQPFDAFDAKAEALALLAEAGAPVDNLQVMGEAGPQFHPGQSATLRLGPKQVLARFGMLHPATARAFDLDGPVAVVELFLDRIPAKKGAGQFARPHYAPPALQAVTRDFAFLVDASVPAGDLLRAVKGADKQAIVAARVFDDFRGQGVAEGQKSLAIEVTLQPVDKSFDEAALKAIADKVVAAAGKLGAELRR</sequence>
<organism>
    <name type="scientific">Novosphingobium aromaticivorans (strain ATCC 700278 / DSM 12444 / CCUG 56034 / CIP 105152 / NBRC 16084 / F199)</name>
    <dbReference type="NCBI Taxonomy" id="279238"/>
    <lineage>
        <taxon>Bacteria</taxon>
        <taxon>Pseudomonadati</taxon>
        <taxon>Pseudomonadota</taxon>
        <taxon>Alphaproteobacteria</taxon>
        <taxon>Sphingomonadales</taxon>
        <taxon>Sphingomonadaceae</taxon>
        <taxon>Novosphingobium</taxon>
    </lineage>
</organism>
<comment type="catalytic activity">
    <reaction evidence="1">
        <text>tRNA(Phe) + L-phenylalanine + ATP = L-phenylalanyl-tRNA(Phe) + AMP + diphosphate + H(+)</text>
        <dbReference type="Rhea" id="RHEA:19413"/>
        <dbReference type="Rhea" id="RHEA-COMP:9668"/>
        <dbReference type="Rhea" id="RHEA-COMP:9699"/>
        <dbReference type="ChEBI" id="CHEBI:15378"/>
        <dbReference type="ChEBI" id="CHEBI:30616"/>
        <dbReference type="ChEBI" id="CHEBI:33019"/>
        <dbReference type="ChEBI" id="CHEBI:58095"/>
        <dbReference type="ChEBI" id="CHEBI:78442"/>
        <dbReference type="ChEBI" id="CHEBI:78531"/>
        <dbReference type="ChEBI" id="CHEBI:456215"/>
        <dbReference type="EC" id="6.1.1.20"/>
    </reaction>
</comment>
<comment type="cofactor">
    <cofactor evidence="1">
        <name>Mg(2+)</name>
        <dbReference type="ChEBI" id="CHEBI:18420"/>
    </cofactor>
    <text evidence="1">Binds 2 magnesium ions per tetramer.</text>
</comment>
<comment type="subunit">
    <text evidence="1">Tetramer of two alpha and two beta subunits.</text>
</comment>
<comment type="subcellular location">
    <subcellularLocation>
        <location evidence="1">Cytoplasm</location>
    </subcellularLocation>
</comment>
<comment type="similarity">
    <text evidence="1">Belongs to the phenylalanyl-tRNA synthetase beta subunit family. Type 1 subfamily.</text>
</comment>
<protein>
    <recommendedName>
        <fullName evidence="1">Phenylalanine--tRNA ligase beta subunit</fullName>
        <ecNumber evidence="1">6.1.1.20</ecNumber>
    </recommendedName>
    <alternativeName>
        <fullName evidence="1">Phenylalanyl-tRNA synthetase beta subunit</fullName>
        <shortName evidence="1">PheRS</shortName>
    </alternativeName>
</protein>